<sequence>MSMAGWITIGIFFLCVLALTRPLGGFLVSVLEGRRTFLSPILGPVERALYRFSGVRPEEEQSWSHYALALLSFKIVCFVAVYAILRLQAYLPLNPAGQGSVAPDLAYNTAVSFVTNTNWQSYGGETTMSYLSQMLGLTVQNFVSAAAGIAVAAAIIRGFARRESKAIGNFWVDMVRATLYVLLPISVVLSLFYVFEGIPQTFSGSVVATTYEGIHQTIALGPVASQEAIKMLGTNGGGFFNVNSAHPFENPDALTNFVEMISIFAIGAGLTNVFGRMVGNERQGWAVFSAMSVLFFVGVTAVYWAEAHGNPAFSAFGIDQSLGNMEGKETRFGVAASALFAAVTTDASCGAVNAMHESFLPLGGMVPLINMMLGEVIIGGVGAGLYGFILFAIIAVFMAGLMVGRTPEYLGKKIEAREIKMTMLAVLCLPLVMLGFTAVAVVVKPGLAALSATGPHGFTEALYAYTSAAANNGSAFAGLTANPYWNITLGIGMMIGRFFVIVPALAIAGSMAAKKIVPPSSGTFPTDTGLFIGLVAGVIIIVGGLTFLPALALGPIVEHLSMLRGTLY</sequence>
<dbReference type="EMBL" id="CP000394">
    <property type="protein sequence ID" value="ABI61080.1"/>
    <property type="molecule type" value="Genomic_DNA"/>
</dbReference>
<dbReference type="RefSeq" id="WP_011630890.1">
    <property type="nucleotide sequence ID" value="NC_008343.2"/>
</dbReference>
<dbReference type="SMR" id="Q0BVS2"/>
<dbReference type="STRING" id="391165.GbCGDNIH1_0182"/>
<dbReference type="KEGG" id="gbe:GbCGDNIH1_0182"/>
<dbReference type="eggNOG" id="COG2060">
    <property type="taxonomic scope" value="Bacteria"/>
</dbReference>
<dbReference type="HOGENOM" id="CLU_018614_3_0_5"/>
<dbReference type="OrthoDB" id="9763796at2"/>
<dbReference type="Proteomes" id="UP000001963">
    <property type="component" value="Chromosome"/>
</dbReference>
<dbReference type="GO" id="GO:0005886">
    <property type="term" value="C:plasma membrane"/>
    <property type="evidence" value="ECO:0007669"/>
    <property type="project" value="UniProtKB-SubCell"/>
</dbReference>
<dbReference type="GO" id="GO:0008556">
    <property type="term" value="F:P-type potassium transmembrane transporter activity"/>
    <property type="evidence" value="ECO:0007669"/>
    <property type="project" value="InterPro"/>
</dbReference>
<dbReference type="GO" id="GO:0030955">
    <property type="term" value="F:potassium ion binding"/>
    <property type="evidence" value="ECO:0007669"/>
    <property type="project" value="UniProtKB-UniRule"/>
</dbReference>
<dbReference type="HAMAP" id="MF_00275">
    <property type="entry name" value="KdpA"/>
    <property type="match status" value="1"/>
</dbReference>
<dbReference type="InterPro" id="IPR004623">
    <property type="entry name" value="KdpA"/>
</dbReference>
<dbReference type="NCBIfam" id="TIGR00680">
    <property type="entry name" value="kdpA"/>
    <property type="match status" value="1"/>
</dbReference>
<dbReference type="PANTHER" id="PTHR30607">
    <property type="entry name" value="POTASSIUM-TRANSPORTING ATPASE A CHAIN"/>
    <property type="match status" value="1"/>
</dbReference>
<dbReference type="PANTHER" id="PTHR30607:SF2">
    <property type="entry name" value="POTASSIUM-TRANSPORTING ATPASE POTASSIUM-BINDING SUBUNIT"/>
    <property type="match status" value="1"/>
</dbReference>
<dbReference type="Pfam" id="PF03814">
    <property type="entry name" value="KdpA"/>
    <property type="match status" value="1"/>
</dbReference>
<dbReference type="PIRSF" id="PIRSF001294">
    <property type="entry name" value="K_ATPaseA"/>
    <property type="match status" value="1"/>
</dbReference>
<accession>Q0BVS2</accession>
<feature type="chain" id="PRO_1000022224" description="Potassium-transporting ATPase potassium-binding subunit">
    <location>
        <begin position="1"/>
        <end position="568"/>
    </location>
</feature>
<feature type="transmembrane region" description="Helical" evidence="1">
    <location>
        <begin position="7"/>
        <end position="27"/>
    </location>
</feature>
<feature type="transmembrane region" description="Helical" evidence="1">
    <location>
        <begin position="65"/>
        <end position="85"/>
    </location>
</feature>
<feature type="transmembrane region" description="Helical" evidence="1">
    <location>
        <begin position="136"/>
        <end position="156"/>
    </location>
</feature>
<feature type="transmembrane region" description="Helical" evidence="1">
    <location>
        <begin position="179"/>
        <end position="199"/>
    </location>
</feature>
<feature type="transmembrane region" description="Helical" evidence="1">
    <location>
        <begin position="254"/>
        <end position="274"/>
    </location>
</feature>
<feature type="transmembrane region" description="Helical" evidence="1">
    <location>
        <begin position="285"/>
        <end position="305"/>
    </location>
</feature>
<feature type="transmembrane region" description="Helical" evidence="1">
    <location>
        <begin position="332"/>
        <end position="352"/>
    </location>
</feature>
<feature type="transmembrane region" description="Helical" evidence="1">
    <location>
        <begin position="354"/>
        <end position="374"/>
    </location>
</feature>
<feature type="transmembrane region" description="Helical" evidence="1">
    <location>
        <begin position="377"/>
        <end position="397"/>
    </location>
</feature>
<feature type="transmembrane region" description="Helical" evidence="1">
    <location>
        <begin position="423"/>
        <end position="443"/>
    </location>
</feature>
<feature type="transmembrane region" description="Helical" evidence="1">
    <location>
        <begin position="487"/>
        <end position="507"/>
    </location>
</feature>
<feature type="transmembrane region" description="Helical" evidence="1">
    <location>
        <begin position="530"/>
        <end position="550"/>
    </location>
</feature>
<keyword id="KW-0997">Cell inner membrane</keyword>
<keyword id="KW-1003">Cell membrane</keyword>
<keyword id="KW-0406">Ion transport</keyword>
<keyword id="KW-0472">Membrane</keyword>
<keyword id="KW-0630">Potassium</keyword>
<keyword id="KW-0633">Potassium transport</keyword>
<keyword id="KW-1185">Reference proteome</keyword>
<keyword id="KW-0812">Transmembrane</keyword>
<keyword id="KW-1133">Transmembrane helix</keyword>
<keyword id="KW-0813">Transport</keyword>
<name>KDPA_GRABC</name>
<gene>
    <name evidence="1" type="primary">kdpA</name>
    <name type="ordered locus">GbCGDNIH1_0182</name>
</gene>
<evidence type="ECO:0000255" key="1">
    <source>
        <dbReference type="HAMAP-Rule" id="MF_00275"/>
    </source>
</evidence>
<organism>
    <name type="scientific">Granulibacter bethesdensis (strain ATCC BAA-1260 / CGDNIH1)</name>
    <dbReference type="NCBI Taxonomy" id="391165"/>
    <lineage>
        <taxon>Bacteria</taxon>
        <taxon>Pseudomonadati</taxon>
        <taxon>Pseudomonadota</taxon>
        <taxon>Alphaproteobacteria</taxon>
        <taxon>Acetobacterales</taxon>
        <taxon>Acetobacteraceae</taxon>
        <taxon>Granulibacter</taxon>
    </lineage>
</organism>
<reference key="1">
    <citation type="journal article" date="2007" name="J. Bacteriol.">
        <title>Genome sequence analysis of the emerging human pathogenic acetic acid bacterium Granulibacter bethesdensis.</title>
        <authorList>
            <person name="Greenberg D.E."/>
            <person name="Porcella S.F."/>
            <person name="Zelazny A.M."/>
            <person name="Virtaneva K."/>
            <person name="Sturdevant D.E."/>
            <person name="Kupko J.J. III"/>
            <person name="Barbian K.D."/>
            <person name="Babar A."/>
            <person name="Dorward D.W."/>
            <person name="Holland S.M."/>
        </authorList>
    </citation>
    <scope>NUCLEOTIDE SEQUENCE [LARGE SCALE GENOMIC DNA]</scope>
    <source>
        <strain>ATCC BAA-1260 / CGDNIH1</strain>
    </source>
</reference>
<comment type="function">
    <text evidence="1">Part of the high-affinity ATP-driven potassium transport (or Kdp) system, which catalyzes the hydrolysis of ATP coupled with the electrogenic transport of potassium into the cytoplasm. This subunit binds the periplasmic potassium ions and delivers the ions to the membrane domain of KdpB through an intramembrane tunnel.</text>
</comment>
<comment type="subunit">
    <text evidence="1">The system is composed of three essential subunits: KdpA, KdpB and KdpC.</text>
</comment>
<comment type="subcellular location">
    <subcellularLocation>
        <location evidence="1">Cell inner membrane</location>
        <topology evidence="1">Multi-pass membrane protein</topology>
    </subcellularLocation>
</comment>
<comment type="similarity">
    <text evidence="1">Belongs to the KdpA family.</text>
</comment>
<protein>
    <recommendedName>
        <fullName evidence="1">Potassium-transporting ATPase potassium-binding subunit</fullName>
    </recommendedName>
    <alternativeName>
        <fullName evidence="1">ATP phosphohydrolase [potassium-transporting] A chain</fullName>
    </alternativeName>
    <alternativeName>
        <fullName evidence="1">Potassium-binding and translocating subunit A</fullName>
    </alternativeName>
    <alternativeName>
        <fullName evidence="1">Potassium-translocating ATPase A chain</fullName>
    </alternativeName>
</protein>
<proteinExistence type="inferred from homology"/>